<keyword id="KW-0963">Cytoplasm</keyword>
<keyword id="KW-0217">Developmental protein</keyword>
<keyword id="KW-0539">Nucleus</keyword>
<keyword id="KW-0647">Proteasome</keyword>
<keyword id="KW-1185">Reference proteome</keyword>
<gene>
    <name type="primary">adrm1-a</name>
    <name evidence="6" type="synonym">xoom</name>
</gene>
<organism>
    <name type="scientific">Xenopus laevis</name>
    <name type="common">African clawed frog</name>
    <dbReference type="NCBI Taxonomy" id="8355"/>
    <lineage>
        <taxon>Eukaryota</taxon>
        <taxon>Metazoa</taxon>
        <taxon>Chordata</taxon>
        <taxon>Craniata</taxon>
        <taxon>Vertebrata</taxon>
        <taxon>Euteleostomi</taxon>
        <taxon>Amphibia</taxon>
        <taxon>Batrachia</taxon>
        <taxon>Anura</taxon>
        <taxon>Pipoidea</taxon>
        <taxon>Pipidae</taxon>
        <taxon>Xenopodinae</taxon>
        <taxon>Xenopus</taxon>
        <taxon>Xenopus</taxon>
    </lineage>
</organism>
<dbReference type="EMBL" id="AB026995">
    <property type="protein sequence ID" value="BAA86033.1"/>
    <property type="molecule type" value="mRNA"/>
</dbReference>
<dbReference type="EMBL" id="BC073651">
    <property type="protein sequence ID" value="AAH73651.2"/>
    <property type="molecule type" value="mRNA"/>
</dbReference>
<dbReference type="EMBL" id="BC123105">
    <property type="protein sequence ID" value="AAI23106.1"/>
    <property type="molecule type" value="mRNA"/>
</dbReference>
<dbReference type="RefSeq" id="NP_001081367.1">
    <property type="nucleotide sequence ID" value="NM_001087898.2"/>
</dbReference>
<dbReference type="SMR" id="Q6GN67"/>
<dbReference type="BioGRID" id="99136">
    <property type="interactions" value="1"/>
</dbReference>
<dbReference type="DNASU" id="397797"/>
<dbReference type="GeneID" id="397797"/>
<dbReference type="KEGG" id="xla:397797"/>
<dbReference type="AGR" id="Xenbase:XB-GENE-6252580"/>
<dbReference type="CTD" id="397797"/>
<dbReference type="Xenbase" id="XB-GENE-6252580">
    <property type="gene designation" value="adrm1.S"/>
</dbReference>
<dbReference type="OrthoDB" id="340431at2759"/>
<dbReference type="Proteomes" id="UP000186698">
    <property type="component" value="Chromosome 9_10S"/>
</dbReference>
<dbReference type="Bgee" id="397797">
    <property type="expression patterns" value="Expressed in oocyte and 20 other cell types or tissues"/>
</dbReference>
<dbReference type="GO" id="GO:0005737">
    <property type="term" value="C:cytoplasm"/>
    <property type="evidence" value="ECO:0007669"/>
    <property type="project" value="UniProtKB-SubCell"/>
</dbReference>
<dbReference type="GO" id="GO:0005634">
    <property type="term" value="C:nucleus"/>
    <property type="evidence" value="ECO:0007669"/>
    <property type="project" value="UniProtKB-SubCell"/>
</dbReference>
<dbReference type="GO" id="GO:0008541">
    <property type="term" value="C:proteasome regulatory particle, lid subcomplex"/>
    <property type="evidence" value="ECO:0000318"/>
    <property type="project" value="GO_Central"/>
</dbReference>
<dbReference type="GO" id="GO:0061133">
    <property type="term" value="F:endopeptidase activator activity"/>
    <property type="evidence" value="ECO:0000318"/>
    <property type="project" value="GO_Central"/>
</dbReference>
<dbReference type="GO" id="GO:0070628">
    <property type="term" value="F:proteasome binding"/>
    <property type="evidence" value="ECO:0000318"/>
    <property type="project" value="GO_Central"/>
</dbReference>
<dbReference type="CDD" id="cd13314">
    <property type="entry name" value="PH_Rpn13"/>
    <property type="match status" value="1"/>
</dbReference>
<dbReference type="FunFam" id="1.10.2020.20:FF:000001">
    <property type="entry name" value="Proteasomal ubiquitin receptor ADRM1"/>
    <property type="match status" value="1"/>
</dbReference>
<dbReference type="FunFam" id="2.30.29.70:FF:000001">
    <property type="entry name" value="Proteasomal ubiquitin receptor ADRM1"/>
    <property type="match status" value="1"/>
</dbReference>
<dbReference type="Gene3D" id="1.10.2020.20">
    <property type="match status" value="1"/>
</dbReference>
<dbReference type="Gene3D" id="2.30.29.70">
    <property type="entry name" value="Proteasomal ubiquitin receptor Rpn13/ADRM1"/>
    <property type="match status" value="1"/>
</dbReference>
<dbReference type="InterPro" id="IPR044867">
    <property type="entry name" value="DEUBAD_dom"/>
</dbReference>
<dbReference type="InterPro" id="IPR006773">
    <property type="entry name" value="Rpn13/ADRM1"/>
</dbReference>
<dbReference type="InterPro" id="IPR044868">
    <property type="entry name" value="Rpn13/ADRM1_Pru"/>
</dbReference>
<dbReference type="InterPro" id="IPR038633">
    <property type="entry name" value="Rpn13/ADRM1_Pru_sf"/>
</dbReference>
<dbReference type="InterPro" id="IPR032368">
    <property type="entry name" value="RPN13_DEUBAD"/>
</dbReference>
<dbReference type="InterPro" id="IPR038108">
    <property type="entry name" value="RPN13_DEUBAD_sf"/>
</dbReference>
<dbReference type="PANTHER" id="PTHR12225">
    <property type="entry name" value="ADHESION REGULATING MOLECULE 1 110 KDA CELL MEMBRANE GLYCOPROTEIN"/>
    <property type="match status" value="1"/>
</dbReference>
<dbReference type="PANTHER" id="PTHR12225:SF0">
    <property type="entry name" value="PROTEASOMAL UBIQUITIN RECEPTOR ADRM1"/>
    <property type="match status" value="1"/>
</dbReference>
<dbReference type="Pfam" id="PF04683">
    <property type="entry name" value="Rpn13_ADRM1_Pru"/>
    <property type="match status" value="1"/>
</dbReference>
<dbReference type="Pfam" id="PF16550">
    <property type="entry name" value="RPN13_C"/>
    <property type="match status" value="1"/>
</dbReference>
<dbReference type="PROSITE" id="PS51916">
    <property type="entry name" value="DEUBAD"/>
    <property type="match status" value="1"/>
</dbReference>
<dbReference type="PROSITE" id="PS51917">
    <property type="entry name" value="PRU"/>
    <property type="match status" value="1"/>
</dbReference>
<name>ADM1A_XENLA</name>
<accession>Q6GN67</accession>
<accession>Q05AY8</accession>
<accession>Q9PVQ2</accession>
<feature type="chain" id="PRO_0000286072" description="Proteasomal ubiquitin receptor ADRM1-A">
    <location>
        <begin position="1"/>
        <end position="404"/>
    </location>
</feature>
<feature type="domain" description="Pru" evidence="3">
    <location>
        <begin position="17"/>
        <end position="130"/>
    </location>
</feature>
<feature type="domain" description="DEUBAD" evidence="2">
    <location>
        <begin position="278"/>
        <end position="390"/>
    </location>
</feature>
<feature type="region of interest" description="Disordered" evidence="4">
    <location>
        <begin position="195"/>
        <end position="258"/>
    </location>
</feature>
<feature type="region of interest" description="Disordered" evidence="4">
    <location>
        <begin position="376"/>
        <end position="404"/>
    </location>
</feature>
<feature type="compositionally biased region" description="Low complexity" evidence="4">
    <location>
        <begin position="195"/>
        <end position="247"/>
    </location>
</feature>
<feature type="compositionally biased region" description="Polar residues" evidence="4">
    <location>
        <begin position="248"/>
        <end position="258"/>
    </location>
</feature>
<feature type="compositionally biased region" description="Basic and acidic residues" evidence="4">
    <location>
        <begin position="386"/>
        <end position="395"/>
    </location>
</feature>
<feature type="sequence conflict" description="In Ref. 1; BAA86033." evidence="7" ref="1">
    <original>G</original>
    <variation>S</variation>
    <location>
        <position position="340"/>
    </location>
</feature>
<sequence length="404" mass="42125">MSSGALFPSLVPGSRGSSSKYLVEFRAGKMSLKGSTVTPDKRKGLVYIQQTDDSLIHFCWKDRTSGSVEDDLIIFPDDCEFKRVSQCTTGRVYVLKFKAGSKRLFFWMQEPKTDKDEEYCRKLNEYLNNPPMPGALGGSGSGSHELSALGGEGGLQSLLGNMSHNQLMQLIGPTGLGGLGGLGALTGPGLASLLGSGGPTTSSSSSSSRSQSAAVTPSSTTSSTRTTSAPVAPAAAPATTPSPAVSSNDGASEATSPTQPIQLSDLQNILATMNVPATGEGGQQVDLASVLTPEIMAPILANAEVQERLTPYLPSGESLPQTADEIQNTLTSPQFQQALGMFSAALASGQLGPLMSQFGLPADAVDAANKGDIEAFAKAMQSTSSQKERESSEKKEEEEDMSLD</sequence>
<proteinExistence type="evidence at transcript level"/>
<comment type="function">
    <text evidence="1">Component of the 26S proteasome, a multiprotein complex involved in the ATP-dependent degradation of ubiquitinated proteins. This complex plays a key role in the maintenance of protein homeostasis by removing misfolded or damaged proteins, which could impair cellular functions, and by removing proteins whose functions are no longer required. Therefore, the proteasome participates in numerous cellular processes, including cell cycle progression, apoptosis, or DNA damage repair. Within the complex, functions as a proteasomal ubiquitin receptor.</text>
</comment>
<comment type="subunit">
    <text evidence="1">Component of the 19S proteasome regulatory particle complex. The 26S proteasome consists of a 20S core particle (CP) and two 19S regulatory subunits (RP).</text>
</comment>
<comment type="subcellular location">
    <subcellularLocation>
        <location evidence="5">Cytoplasm</location>
    </subcellularLocation>
    <subcellularLocation>
        <location evidence="1">Nucleus</location>
    </subcellularLocation>
</comment>
<comment type="similarity">
    <text evidence="7">Belongs to the ADRM1 family.</text>
</comment>
<reference key="1">
    <citation type="journal article" date="1999" name="Int. J. Dev. Biol.">
        <title>Xoom: a novel oocyte membrane protein maternally expressed and involved in the gastrulation movement of Xenopus embryos.</title>
        <authorList>
            <person name="Hasegawa K."/>
            <person name="Shiraishi T."/>
            <person name="Kinoshita T."/>
        </authorList>
    </citation>
    <scope>NUCLEOTIDE SEQUENCE [MRNA]</scope>
</reference>
<reference key="2">
    <citation type="submission" date="2004-06" db="EMBL/GenBank/DDBJ databases">
        <authorList>
            <consortium name="NIH - Xenopus Gene Collection (XGC) project"/>
        </authorList>
    </citation>
    <scope>NUCLEOTIDE SEQUENCE [LARGE SCALE MRNA]</scope>
    <source>
        <tissue>Embryo</tissue>
        <tissue>Fat body</tissue>
    </source>
</reference>
<reference key="3">
    <citation type="journal article" date="2000" name="Dev. Growth Differ.">
        <title>Xoom is required for epibolic movement of animal ectodermal cells in Xenopus laevis gastrulation.</title>
        <authorList>
            <person name="Hasegawa K."/>
            <person name="Kinoshita T."/>
        </authorList>
    </citation>
    <scope>FUNCTION</scope>
</reference>
<reference key="4">
    <citation type="journal article" date="2001" name="Dev. Growth Differ.">
        <title>Xoom is maternally stored and functions as a transmembrane protein for gastrulation movement in Xenopus embryos.</title>
        <authorList>
            <person name="Hasegawa K."/>
            <person name="Sakurai N."/>
            <person name="Kinoshita T."/>
        </authorList>
    </citation>
    <scope>SUBCELLULAR LOCATION</scope>
</reference>
<protein>
    <recommendedName>
        <fullName>Proteasomal ubiquitin receptor ADRM1-A</fullName>
    </recommendedName>
    <alternativeName>
        <fullName evidence="6">Oocyte membrane protein</fullName>
    </alternativeName>
</protein>
<evidence type="ECO:0000250" key="1">
    <source>
        <dbReference type="UniProtKB" id="Q16186"/>
    </source>
</evidence>
<evidence type="ECO:0000255" key="2">
    <source>
        <dbReference type="PROSITE-ProRule" id="PRU01264"/>
    </source>
</evidence>
<evidence type="ECO:0000255" key="3">
    <source>
        <dbReference type="PROSITE-ProRule" id="PRU01265"/>
    </source>
</evidence>
<evidence type="ECO:0000256" key="4">
    <source>
        <dbReference type="SAM" id="MobiDB-lite"/>
    </source>
</evidence>
<evidence type="ECO:0000269" key="5">
    <source>
    </source>
</evidence>
<evidence type="ECO:0000303" key="6">
    <source>
    </source>
</evidence>
<evidence type="ECO:0000305" key="7"/>